<dbReference type="EC" id="3.6.1.-" evidence="1"/>
<dbReference type="EC" id="3.6.1.22" evidence="1"/>
<dbReference type="EMBL" id="FM954972">
    <property type="protein sequence ID" value="CAV20256.1"/>
    <property type="molecule type" value="Genomic_DNA"/>
</dbReference>
<dbReference type="SMR" id="B7VM66"/>
<dbReference type="STRING" id="575788.VS_2960"/>
<dbReference type="KEGG" id="vsp:VS_2960"/>
<dbReference type="PATRIC" id="fig|575788.5.peg.4169"/>
<dbReference type="eggNOG" id="COG2816">
    <property type="taxonomic scope" value="Bacteria"/>
</dbReference>
<dbReference type="HOGENOM" id="CLU_037162_0_1_6"/>
<dbReference type="Proteomes" id="UP000009100">
    <property type="component" value="Chromosome 1"/>
</dbReference>
<dbReference type="GO" id="GO:0005829">
    <property type="term" value="C:cytosol"/>
    <property type="evidence" value="ECO:0007669"/>
    <property type="project" value="TreeGrafter"/>
</dbReference>
<dbReference type="GO" id="GO:0000287">
    <property type="term" value="F:magnesium ion binding"/>
    <property type="evidence" value="ECO:0007669"/>
    <property type="project" value="UniProtKB-UniRule"/>
</dbReference>
<dbReference type="GO" id="GO:0030145">
    <property type="term" value="F:manganese ion binding"/>
    <property type="evidence" value="ECO:0007669"/>
    <property type="project" value="UniProtKB-UniRule"/>
</dbReference>
<dbReference type="GO" id="GO:0000210">
    <property type="term" value="F:NAD+ diphosphatase activity"/>
    <property type="evidence" value="ECO:0007669"/>
    <property type="project" value="UniProtKB-UniRule"/>
</dbReference>
<dbReference type="GO" id="GO:0035529">
    <property type="term" value="F:NADH pyrophosphatase activity"/>
    <property type="evidence" value="ECO:0007669"/>
    <property type="project" value="TreeGrafter"/>
</dbReference>
<dbReference type="GO" id="GO:0110153">
    <property type="term" value="F:RNA NAD-cap (NMN-forming) hydrolase activity"/>
    <property type="evidence" value="ECO:0007669"/>
    <property type="project" value="RHEA"/>
</dbReference>
<dbReference type="GO" id="GO:0008270">
    <property type="term" value="F:zinc ion binding"/>
    <property type="evidence" value="ECO:0007669"/>
    <property type="project" value="UniProtKB-UniRule"/>
</dbReference>
<dbReference type="GO" id="GO:0019677">
    <property type="term" value="P:NAD catabolic process"/>
    <property type="evidence" value="ECO:0007669"/>
    <property type="project" value="TreeGrafter"/>
</dbReference>
<dbReference type="GO" id="GO:0006734">
    <property type="term" value="P:NADH metabolic process"/>
    <property type="evidence" value="ECO:0007669"/>
    <property type="project" value="TreeGrafter"/>
</dbReference>
<dbReference type="GO" id="GO:0006742">
    <property type="term" value="P:NADP catabolic process"/>
    <property type="evidence" value="ECO:0007669"/>
    <property type="project" value="TreeGrafter"/>
</dbReference>
<dbReference type="CDD" id="cd03429">
    <property type="entry name" value="NUDIX_NADH_pyrophosphatase_Nudt13"/>
    <property type="match status" value="1"/>
</dbReference>
<dbReference type="FunFam" id="3.90.79.10:FF:000004">
    <property type="entry name" value="NADH pyrophosphatase"/>
    <property type="match status" value="1"/>
</dbReference>
<dbReference type="Gene3D" id="3.90.79.20">
    <property type="match status" value="1"/>
</dbReference>
<dbReference type="Gene3D" id="3.90.79.10">
    <property type="entry name" value="Nucleoside Triphosphate Pyrophosphohydrolase"/>
    <property type="match status" value="1"/>
</dbReference>
<dbReference type="HAMAP" id="MF_00297">
    <property type="entry name" value="Nudix_NudC"/>
    <property type="match status" value="1"/>
</dbReference>
<dbReference type="InterPro" id="IPR050241">
    <property type="entry name" value="NAD-cap_RNA_hydrolase_NudC"/>
</dbReference>
<dbReference type="InterPro" id="IPR049734">
    <property type="entry name" value="NudC-like_C"/>
</dbReference>
<dbReference type="InterPro" id="IPR020476">
    <property type="entry name" value="Nudix_hydrolase"/>
</dbReference>
<dbReference type="InterPro" id="IPR015797">
    <property type="entry name" value="NUDIX_hydrolase-like_dom_sf"/>
</dbReference>
<dbReference type="InterPro" id="IPR020084">
    <property type="entry name" value="NUDIX_hydrolase_CS"/>
</dbReference>
<dbReference type="InterPro" id="IPR000086">
    <property type="entry name" value="NUDIX_hydrolase_dom"/>
</dbReference>
<dbReference type="InterPro" id="IPR022925">
    <property type="entry name" value="RNA_Hydrolase_NudC"/>
</dbReference>
<dbReference type="InterPro" id="IPR015376">
    <property type="entry name" value="Znr_NADH_PPase"/>
</dbReference>
<dbReference type="NCBIfam" id="NF001299">
    <property type="entry name" value="PRK00241.1"/>
    <property type="match status" value="1"/>
</dbReference>
<dbReference type="PANTHER" id="PTHR42904:SF6">
    <property type="entry name" value="NAD-CAPPED RNA HYDROLASE NUDT12"/>
    <property type="match status" value="1"/>
</dbReference>
<dbReference type="PANTHER" id="PTHR42904">
    <property type="entry name" value="NUDIX HYDROLASE, NUDC SUBFAMILY"/>
    <property type="match status" value="1"/>
</dbReference>
<dbReference type="Pfam" id="PF00293">
    <property type="entry name" value="NUDIX"/>
    <property type="match status" value="1"/>
</dbReference>
<dbReference type="Pfam" id="PF09297">
    <property type="entry name" value="Zn_ribbon_NUD"/>
    <property type="match status" value="1"/>
</dbReference>
<dbReference type="PRINTS" id="PR00502">
    <property type="entry name" value="NUDIXFAMILY"/>
</dbReference>
<dbReference type="SUPFAM" id="SSF55811">
    <property type="entry name" value="Nudix"/>
    <property type="match status" value="1"/>
</dbReference>
<dbReference type="PROSITE" id="PS51462">
    <property type="entry name" value="NUDIX"/>
    <property type="match status" value="1"/>
</dbReference>
<dbReference type="PROSITE" id="PS00893">
    <property type="entry name" value="NUDIX_BOX"/>
    <property type="match status" value="1"/>
</dbReference>
<evidence type="ECO:0000255" key="1">
    <source>
        <dbReference type="HAMAP-Rule" id="MF_00297"/>
    </source>
</evidence>
<organism>
    <name type="scientific">Vibrio atlanticus (strain LGP32)</name>
    <name type="common">Vibrio splendidus (strain Mel32)</name>
    <dbReference type="NCBI Taxonomy" id="575788"/>
    <lineage>
        <taxon>Bacteria</taxon>
        <taxon>Pseudomonadati</taxon>
        <taxon>Pseudomonadota</taxon>
        <taxon>Gammaproteobacteria</taxon>
        <taxon>Vibrionales</taxon>
        <taxon>Vibrionaceae</taxon>
        <taxon>Vibrio</taxon>
    </lineage>
</organism>
<comment type="function">
    <text evidence="1">mRNA decapping enzyme that specifically removes the nicotinamide adenine dinucleotide (NAD) cap from a subset of mRNAs by hydrolyzing the diphosphate linkage to produce nicotinamide mononucleotide (NMN) and 5' monophosphate mRNA. The NAD-cap is present at the 5'-end of some mRNAs and stabilizes RNA against 5'-processing. Has preference for mRNAs with a 5'-end purine. Catalyzes the hydrolysis of a broad range of dinucleotide pyrophosphates.</text>
</comment>
<comment type="catalytic activity">
    <reaction evidence="1">
        <text>a 5'-end NAD(+)-phospho-ribonucleoside in mRNA + H2O = a 5'-end phospho-adenosine-phospho-ribonucleoside in mRNA + beta-nicotinamide D-ribonucleotide + 2 H(+)</text>
        <dbReference type="Rhea" id="RHEA:60876"/>
        <dbReference type="Rhea" id="RHEA-COMP:15698"/>
        <dbReference type="Rhea" id="RHEA-COMP:15719"/>
        <dbReference type="ChEBI" id="CHEBI:14649"/>
        <dbReference type="ChEBI" id="CHEBI:15377"/>
        <dbReference type="ChEBI" id="CHEBI:15378"/>
        <dbReference type="ChEBI" id="CHEBI:144029"/>
        <dbReference type="ChEBI" id="CHEBI:144051"/>
    </reaction>
    <physiologicalReaction direction="left-to-right" evidence="1">
        <dbReference type="Rhea" id="RHEA:60877"/>
    </physiologicalReaction>
</comment>
<comment type="catalytic activity">
    <reaction evidence="1">
        <text>NAD(+) + H2O = beta-nicotinamide D-ribonucleotide + AMP + 2 H(+)</text>
        <dbReference type="Rhea" id="RHEA:11800"/>
        <dbReference type="ChEBI" id="CHEBI:14649"/>
        <dbReference type="ChEBI" id="CHEBI:15377"/>
        <dbReference type="ChEBI" id="CHEBI:15378"/>
        <dbReference type="ChEBI" id="CHEBI:57540"/>
        <dbReference type="ChEBI" id="CHEBI:456215"/>
        <dbReference type="EC" id="3.6.1.22"/>
    </reaction>
</comment>
<comment type="catalytic activity">
    <reaction evidence="1">
        <text>NADH + H2O = reduced beta-nicotinamide D-ribonucleotide + AMP + 2 H(+)</text>
        <dbReference type="Rhea" id="RHEA:48868"/>
        <dbReference type="ChEBI" id="CHEBI:15377"/>
        <dbReference type="ChEBI" id="CHEBI:15378"/>
        <dbReference type="ChEBI" id="CHEBI:57945"/>
        <dbReference type="ChEBI" id="CHEBI:90832"/>
        <dbReference type="ChEBI" id="CHEBI:456215"/>
        <dbReference type="EC" id="3.6.1.22"/>
    </reaction>
</comment>
<comment type="cofactor">
    <cofactor evidence="1">
        <name>Mg(2+)</name>
        <dbReference type="ChEBI" id="CHEBI:18420"/>
    </cofactor>
    <cofactor evidence="1">
        <name>Mn(2+)</name>
        <dbReference type="ChEBI" id="CHEBI:29035"/>
    </cofactor>
    <text evidence="1">Divalent metal cations. Mg(2+) or Mn(2+).</text>
</comment>
<comment type="cofactor">
    <cofactor evidence="1">
        <name>Zn(2+)</name>
        <dbReference type="ChEBI" id="CHEBI:29105"/>
    </cofactor>
    <text evidence="1">Binds 1 zinc ion per subunit.</text>
</comment>
<comment type="subunit">
    <text evidence="1">Homodimer.</text>
</comment>
<comment type="similarity">
    <text evidence="1">Belongs to the Nudix hydrolase family. NudC subfamily.</text>
</comment>
<sequence length="269" mass="30334">MLKKSDNKMTDQAYWCVVSGSDIWVNDDQFPFGSAEELGLSVEHAICIGQHQGRKVYWLNDCDVEIELSMVSLRDLLHWPESSFLIASKAIQYGHMTQSMRFCPQCGGRNHLNHNQVAMQCGDCRTLHYPRIFPCIIVAVRNDNKILLAQHPRHKTGMYTVIAGFLEVGETLEQCVAREVKEETGIDVSNIRYFGSQPWAFPSSMMMAFLADYAGGTLKPDYSELSDAQWFDVTSLPDVAPVGTIARQLIENTVDDIRKASVAEQELEH</sequence>
<accession>B7VM66</accession>
<protein>
    <recommendedName>
        <fullName evidence="1">NAD-capped RNA hydrolase NudC</fullName>
        <shortName evidence="1">DeNADding enzyme NudC</shortName>
        <ecNumber evidence="1">3.6.1.-</ecNumber>
    </recommendedName>
    <alternativeName>
        <fullName evidence="1">NADH pyrophosphatase</fullName>
        <ecNumber evidence="1">3.6.1.22</ecNumber>
    </alternativeName>
</protein>
<gene>
    <name evidence="1" type="primary">nudC</name>
    <name type="ordered locus">VS_2960</name>
</gene>
<keyword id="KW-0378">Hydrolase</keyword>
<keyword id="KW-0460">Magnesium</keyword>
<keyword id="KW-0464">Manganese</keyword>
<keyword id="KW-0479">Metal-binding</keyword>
<keyword id="KW-0520">NAD</keyword>
<keyword id="KW-0862">Zinc</keyword>
<reference key="1">
    <citation type="submission" date="2009-02" db="EMBL/GenBank/DDBJ databases">
        <title>Vibrio splendidus str. LGP32 complete genome.</title>
        <authorList>
            <person name="Mazel D."/>
            <person name="Le Roux F."/>
        </authorList>
    </citation>
    <scope>NUCLEOTIDE SEQUENCE [LARGE SCALE GENOMIC DNA]</scope>
    <source>
        <strain>LGP32</strain>
    </source>
</reference>
<proteinExistence type="inferred from homology"/>
<feature type="chain" id="PRO_1000191838" description="NAD-capped RNA hydrolase NudC">
    <location>
        <begin position="1"/>
        <end position="269"/>
    </location>
</feature>
<feature type="domain" description="Nudix hydrolase" evidence="1">
    <location>
        <begin position="130"/>
        <end position="253"/>
    </location>
</feature>
<feature type="short sequence motif" description="Nudix box" evidence="1">
    <location>
        <begin position="164"/>
        <end position="185"/>
    </location>
</feature>
<feature type="binding site" evidence="1">
    <location>
        <position position="74"/>
    </location>
    <ligand>
        <name>substrate</name>
    </ligand>
</feature>
<feature type="binding site" evidence="1">
    <location>
        <position position="103"/>
    </location>
    <ligand>
        <name>Zn(2+)</name>
        <dbReference type="ChEBI" id="CHEBI:29105"/>
    </ligand>
</feature>
<feature type="binding site" evidence="1">
    <location>
        <position position="106"/>
    </location>
    <ligand>
        <name>Zn(2+)</name>
        <dbReference type="ChEBI" id="CHEBI:29105"/>
    </ligand>
</feature>
<feature type="binding site" evidence="1">
    <location>
        <position position="121"/>
    </location>
    <ligand>
        <name>Zn(2+)</name>
        <dbReference type="ChEBI" id="CHEBI:29105"/>
    </ligand>
</feature>
<feature type="binding site" evidence="1">
    <location>
        <position position="124"/>
    </location>
    <ligand>
        <name>Zn(2+)</name>
        <dbReference type="ChEBI" id="CHEBI:29105"/>
    </ligand>
</feature>
<feature type="binding site" evidence="1">
    <location>
        <position position="129"/>
    </location>
    <ligand>
        <name>substrate</name>
    </ligand>
</feature>
<feature type="binding site" evidence="1">
    <location>
        <position position="163"/>
    </location>
    <ligand>
        <name>a divalent metal cation</name>
        <dbReference type="ChEBI" id="CHEBI:60240"/>
        <label>1</label>
    </ligand>
</feature>
<feature type="binding site" evidence="1">
    <location>
        <position position="179"/>
    </location>
    <ligand>
        <name>a divalent metal cation</name>
        <dbReference type="ChEBI" id="CHEBI:60240"/>
        <label>2</label>
    </ligand>
</feature>
<feature type="binding site" evidence="1">
    <location>
        <position position="179"/>
    </location>
    <ligand>
        <name>a divalent metal cation</name>
        <dbReference type="ChEBI" id="CHEBI:60240"/>
        <label>3</label>
    </ligand>
</feature>
<feature type="binding site" evidence="1">
    <location>
        <position position="183"/>
    </location>
    <ligand>
        <name>a divalent metal cation</name>
        <dbReference type="ChEBI" id="CHEBI:60240"/>
        <label>1</label>
    </ligand>
</feature>
<feature type="binding site" evidence="1">
    <location>
        <position position="183"/>
    </location>
    <ligand>
        <name>a divalent metal cation</name>
        <dbReference type="ChEBI" id="CHEBI:60240"/>
        <label>3</label>
    </ligand>
</feature>
<feature type="binding site" evidence="1">
    <location>
        <begin position="197"/>
        <end position="204"/>
    </location>
    <ligand>
        <name>substrate</name>
    </ligand>
</feature>
<feature type="binding site" evidence="1">
    <location>
        <position position="224"/>
    </location>
    <ligand>
        <name>a divalent metal cation</name>
        <dbReference type="ChEBI" id="CHEBI:60240"/>
        <label>1</label>
    </ligand>
</feature>
<feature type="binding site" evidence="1">
    <location>
        <position position="224"/>
    </location>
    <ligand>
        <name>a divalent metal cation</name>
        <dbReference type="ChEBI" id="CHEBI:60240"/>
        <label>3</label>
    </ligand>
</feature>
<feature type="binding site" evidence="1">
    <location>
        <position position="246"/>
    </location>
    <ligand>
        <name>substrate</name>
    </ligand>
</feature>
<name>NUDC_VIBA3</name>